<reference key="1">
    <citation type="journal article" date="2001" name="Proc. Natl. Acad. Sci. U.S.A.">
        <title>Complete genomic sequence of Pasteurella multocida Pm70.</title>
        <authorList>
            <person name="May B.J."/>
            <person name="Zhang Q."/>
            <person name="Li L.L."/>
            <person name="Paustian M.L."/>
            <person name="Whittam T.S."/>
            <person name="Kapur V."/>
        </authorList>
    </citation>
    <scope>NUCLEOTIDE SEQUENCE [LARGE SCALE GENOMIC DNA]</scope>
    <source>
        <strain>Pm70</strain>
    </source>
</reference>
<accession>Q9CMK5</accession>
<protein>
    <recommendedName>
        <fullName evidence="1">Valine--tRNA ligase</fullName>
        <ecNumber evidence="1">6.1.1.9</ecNumber>
    </recommendedName>
    <alternativeName>
        <fullName evidence="1">Valyl-tRNA synthetase</fullName>
        <shortName evidence="1">ValRS</shortName>
    </alternativeName>
</protein>
<proteinExistence type="inferred from homology"/>
<sequence length="954" mass="108685">MTQNFEMADRFTPSAVEQALYKHWEESGYFKPSEDTSKPSYSIAIPPPNVTGSLHMGHAFQQTLMDILIRFNRMEGHNTLWQTGTDHAGIATQMVVERKIAAEEGKTRHDYGREAFIDKIWDWKAYSGGTISQQMRRLGNSIDWERERFTMDEGLSDAVKEVFVRLHEEGLIYRGKRLVNWDPKLHTAISDLEVENKESKGSLWHFRYPLANGAKTADGKDYLVVATTRPETMLGDTAVAVHPEDERYQSLIGKTVVLPLANREIPIIADDYVDREFGTGVVKITPAHDFNDYEVGKRHQLPMVNVMTLNADIRAEAEIIGSDGKILESYTALIPTKYQGMERFAARKQIVADFEELGLLDEIKPHDLKVPYGDRGGVPIEPMLTDQWYVSVKPLAEVAVKAVEDGEIQFVPKQYENLYFSWMRDIQDWCISRQLWWGHRIPAWYDEQGNVYVARDEAEVRAKHNLPADLALKQDEDVLDTWFSSGLWTFSTLGWPKQTPDLKMFHSTDVLITGFDIIFFWVARMIMFTMHFVKDENGKPQVPFKTVYVTGLIRDEQGQKMSKSKGNVIDPLDMIDGIDLESLLEKRTGNMMQPQLAEKIAKATIKAFPEGIAEHGTDALRFTLTALATNGRDINWDMKRLEGYRNFCNKLWNASRFVLTNDKLDLSEGSVEYSVADRWIQSEFNRTVEAFRNALAQFRFDLCATALYEFTWNQFCDWYLELTKPVLVNGSVAQKRGASQTLINVLEKLLRLTHPVMPFITEEIWHKVKAFAGVSGDTIMLQAFPQFEQSALDYQAEAEINWMKEVIVAVRNIRAESNIPPSKGLDLLLRNLSEADQNALENNRTLIQAMAKLDAIRVLEAGEDAPLSVAKLVNNAELLVPMAGFINKEAELARLNKEIEKYQGEIQRIENKLANEAFVAKAPPAVIEKERAKMAEYAEGLNKLKQQYLAIEAL</sequence>
<evidence type="ECO:0000255" key="1">
    <source>
        <dbReference type="HAMAP-Rule" id="MF_02004"/>
    </source>
</evidence>
<comment type="function">
    <text evidence="1">Catalyzes the attachment of valine to tRNA(Val). As ValRS can inadvertently accommodate and process structurally similar amino acids such as threonine, to avoid such errors, it has a 'posttransfer' editing activity that hydrolyzes mischarged Thr-tRNA(Val) in a tRNA-dependent manner.</text>
</comment>
<comment type="catalytic activity">
    <reaction evidence="1">
        <text>tRNA(Val) + L-valine + ATP = L-valyl-tRNA(Val) + AMP + diphosphate</text>
        <dbReference type="Rhea" id="RHEA:10704"/>
        <dbReference type="Rhea" id="RHEA-COMP:9672"/>
        <dbReference type="Rhea" id="RHEA-COMP:9708"/>
        <dbReference type="ChEBI" id="CHEBI:30616"/>
        <dbReference type="ChEBI" id="CHEBI:33019"/>
        <dbReference type="ChEBI" id="CHEBI:57762"/>
        <dbReference type="ChEBI" id="CHEBI:78442"/>
        <dbReference type="ChEBI" id="CHEBI:78537"/>
        <dbReference type="ChEBI" id="CHEBI:456215"/>
        <dbReference type="EC" id="6.1.1.9"/>
    </reaction>
</comment>
<comment type="subunit">
    <text evidence="1">Monomer.</text>
</comment>
<comment type="subcellular location">
    <subcellularLocation>
        <location evidence="1">Cytoplasm</location>
    </subcellularLocation>
</comment>
<comment type="domain">
    <text evidence="1">ValRS has two distinct active sites: one for aminoacylation and one for editing. The misactivated threonine is translocated from the active site to the editing site.</text>
</comment>
<comment type="domain">
    <text evidence="1">The C-terminal coiled-coil domain is crucial for aminoacylation activity.</text>
</comment>
<comment type="similarity">
    <text evidence="1">Belongs to the class-I aminoacyl-tRNA synthetase family. ValS type 1 subfamily.</text>
</comment>
<dbReference type="EC" id="6.1.1.9" evidence="1"/>
<dbReference type="EMBL" id="AE004439">
    <property type="protein sequence ID" value="AAK02902.1"/>
    <property type="molecule type" value="Genomic_DNA"/>
</dbReference>
<dbReference type="RefSeq" id="WP_010906864.1">
    <property type="nucleotide sequence ID" value="NC_002663.1"/>
</dbReference>
<dbReference type="SMR" id="Q9CMK5"/>
<dbReference type="STRING" id="272843.PM0818"/>
<dbReference type="EnsemblBacteria" id="AAK02902">
    <property type="protein sequence ID" value="AAK02902"/>
    <property type="gene ID" value="PM0818"/>
</dbReference>
<dbReference type="KEGG" id="pmu:PM0818"/>
<dbReference type="PATRIC" id="fig|272843.6.peg.827"/>
<dbReference type="HOGENOM" id="CLU_001493_0_2_6"/>
<dbReference type="OrthoDB" id="9810365at2"/>
<dbReference type="Proteomes" id="UP000000809">
    <property type="component" value="Chromosome"/>
</dbReference>
<dbReference type="GO" id="GO:0005829">
    <property type="term" value="C:cytosol"/>
    <property type="evidence" value="ECO:0007669"/>
    <property type="project" value="TreeGrafter"/>
</dbReference>
<dbReference type="GO" id="GO:0002161">
    <property type="term" value="F:aminoacyl-tRNA deacylase activity"/>
    <property type="evidence" value="ECO:0007669"/>
    <property type="project" value="InterPro"/>
</dbReference>
<dbReference type="GO" id="GO:0005524">
    <property type="term" value="F:ATP binding"/>
    <property type="evidence" value="ECO:0007669"/>
    <property type="project" value="UniProtKB-UniRule"/>
</dbReference>
<dbReference type="GO" id="GO:0004832">
    <property type="term" value="F:valine-tRNA ligase activity"/>
    <property type="evidence" value="ECO:0007669"/>
    <property type="project" value="UniProtKB-UniRule"/>
</dbReference>
<dbReference type="GO" id="GO:0006438">
    <property type="term" value="P:valyl-tRNA aminoacylation"/>
    <property type="evidence" value="ECO:0007669"/>
    <property type="project" value="UniProtKB-UniRule"/>
</dbReference>
<dbReference type="CDD" id="cd07962">
    <property type="entry name" value="Anticodon_Ia_Val"/>
    <property type="match status" value="1"/>
</dbReference>
<dbReference type="CDD" id="cd00817">
    <property type="entry name" value="ValRS_core"/>
    <property type="match status" value="1"/>
</dbReference>
<dbReference type="FunFam" id="1.10.287.380:FF:000001">
    <property type="entry name" value="Valine--tRNA ligase"/>
    <property type="match status" value="1"/>
</dbReference>
<dbReference type="FunFam" id="1.10.730.10:FF:000007">
    <property type="entry name" value="Valine--tRNA ligase"/>
    <property type="match status" value="1"/>
</dbReference>
<dbReference type="FunFam" id="3.40.50.620:FF:000032">
    <property type="entry name" value="Valine--tRNA ligase"/>
    <property type="match status" value="1"/>
</dbReference>
<dbReference type="FunFam" id="3.40.50.620:FF:000146">
    <property type="entry name" value="Valine--tRNA ligase"/>
    <property type="match status" value="1"/>
</dbReference>
<dbReference type="FunFam" id="3.90.740.10:FF:000003">
    <property type="entry name" value="Valine--tRNA ligase"/>
    <property type="match status" value="1"/>
</dbReference>
<dbReference type="FunFam" id="3.90.740.10:FF:000004">
    <property type="entry name" value="Valine--tRNA ligase"/>
    <property type="match status" value="1"/>
</dbReference>
<dbReference type="Gene3D" id="3.40.50.620">
    <property type="entry name" value="HUPs"/>
    <property type="match status" value="2"/>
</dbReference>
<dbReference type="Gene3D" id="1.10.730.10">
    <property type="entry name" value="Isoleucyl-tRNA Synthetase, Domain 1"/>
    <property type="match status" value="1"/>
</dbReference>
<dbReference type="Gene3D" id="1.10.287.380">
    <property type="entry name" value="Valyl-tRNA synthetase, C-terminal domain"/>
    <property type="match status" value="1"/>
</dbReference>
<dbReference type="Gene3D" id="3.90.740.10">
    <property type="entry name" value="Valyl/Leucyl/Isoleucyl-tRNA synthetase, editing domain"/>
    <property type="match status" value="1"/>
</dbReference>
<dbReference type="HAMAP" id="MF_02004">
    <property type="entry name" value="Val_tRNA_synth_type1"/>
    <property type="match status" value="1"/>
</dbReference>
<dbReference type="InterPro" id="IPR001412">
    <property type="entry name" value="aa-tRNA-synth_I_CS"/>
</dbReference>
<dbReference type="InterPro" id="IPR002300">
    <property type="entry name" value="aa-tRNA-synth_Ia"/>
</dbReference>
<dbReference type="InterPro" id="IPR033705">
    <property type="entry name" value="Anticodon_Ia_Val"/>
</dbReference>
<dbReference type="InterPro" id="IPR013155">
    <property type="entry name" value="M/V/L/I-tRNA-synth_anticd-bd"/>
</dbReference>
<dbReference type="InterPro" id="IPR014729">
    <property type="entry name" value="Rossmann-like_a/b/a_fold"/>
</dbReference>
<dbReference type="InterPro" id="IPR010978">
    <property type="entry name" value="tRNA-bd_arm"/>
</dbReference>
<dbReference type="InterPro" id="IPR009080">
    <property type="entry name" value="tRNAsynth_Ia_anticodon-bd"/>
</dbReference>
<dbReference type="InterPro" id="IPR037118">
    <property type="entry name" value="Val-tRNA_synth_C_sf"/>
</dbReference>
<dbReference type="InterPro" id="IPR019499">
    <property type="entry name" value="Val-tRNA_synth_tRNA-bd"/>
</dbReference>
<dbReference type="InterPro" id="IPR009008">
    <property type="entry name" value="Val/Leu/Ile-tRNA-synth_edit"/>
</dbReference>
<dbReference type="InterPro" id="IPR002303">
    <property type="entry name" value="Valyl-tRNA_ligase"/>
</dbReference>
<dbReference type="NCBIfam" id="NF004349">
    <property type="entry name" value="PRK05729.1"/>
    <property type="match status" value="1"/>
</dbReference>
<dbReference type="NCBIfam" id="TIGR00422">
    <property type="entry name" value="valS"/>
    <property type="match status" value="1"/>
</dbReference>
<dbReference type="PANTHER" id="PTHR11946:SF93">
    <property type="entry name" value="VALINE--TRNA LIGASE, CHLOROPLASTIC_MITOCHONDRIAL 2"/>
    <property type="match status" value="1"/>
</dbReference>
<dbReference type="PANTHER" id="PTHR11946">
    <property type="entry name" value="VALYL-TRNA SYNTHETASES"/>
    <property type="match status" value="1"/>
</dbReference>
<dbReference type="Pfam" id="PF08264">
    <property type="entry name" value="Anticodon_1"/>
    <property type="match status" value="1"/>
</dbReference>
<dbReference type="Pfam" id="PF00133">
    <property type="entry name" value="tRNA-synt_1"/>
    <property type="match status" value="1"/>
</dbReference>
<dbReference type="Pfam" id="PF10458">
    <property type="entry name" value="Val_tRNA-synt_C"/>
    <property type="match status" value="1"/>
</dbReference>
<dbReference type="PRINTS" id="PR00986">
    <property type="entry name" value="TRNASYNTHVAL"/>
</dbReference>
<dbReference type="SUPFAM" id="SSF47323">
    <property type="entry name" value="Anticodon-binding domain of a subclass of class I aminoacyl-tRNA synthetases"/>
    <property type="match status" value="1"/>
</dbReference>
<dbReference type="SUPFAM" id="SSF52374">
    <property type="entry name" value="Nucleotidylyl transferase"/>
    <property type="match status" value="1"/>
</dbReference>
<dbReference type="SUPFAM" id="SSF46589">
    <property type="entry name" value="tRNA-binding arm"/>
    <property type="match status" value="1"/>
</dbReference>
<dbReference type="SUPFAM" id="SSF50677">
    <property type="entry name" value="ValRS/IleRS/LeuRS editing domain"/>
    <property type="match status" value="1"/>
</dbReference>
<dbReference type="PROSITE" id="PS00178">
    <property type="entry name" value="AA_TRNA_LIGASE_I"/>
    <property type="match status" value="1"/>
</dbReference>
<keyword id="KW-0030">Aminoacyl-tRNA synthetase</keyword>
<keyword id="KW-0067">ATP-binding</keyword>
<keyword id="KW-0175">Coiled coil</keyword>
<keyword id="KW-0963">Cytoplasm</keyword>
<keyword id="KW-0436">Ligase</keyword>
<keyword id="KW-0547">Nucleotide-binding</keyword>
<keyword id="KW-0648">Protein biosynthesis</keyword>
<keyword id="KW-1185">Reference proteome</keyword>
<name>SYV_PASMU</name>
<feature type="chain" id="PRO_0000224524" description="Valine--tRNA ligase">
    <location>
        <begin position="1"/>
        <end position="954"/>
    </location>
</feature>
<feature type="coiled-coil region" evidence="1">
    <location>
        <begin position="883"/>
        <end position="953"/>
    </location>
</feature>
<feature type="short sequence motif" description="'HIGH' region">
    <location>
        <begin position="48"/>
        <end position="58"/>
    </location>
</feature>
<feature type="short sequence motif" description="'KMSKS' region">
    <location>
        <begin position="560"/>
        <end position="564"/>
    </location>
</feature>
<feature type="binding site" evidence="1">
    <location>
        <position position="563"/>
    </location>
    <ligand>
        <name>ATP</name>
        <dbReference type="ChEBI" id="CHEBI:30616"/>
    </ligand>
</feature>
<organism>
    <name type="scientific">Pasteurella multocida (strain Pm70)</name>
    <dbReference type="NCBI Taxonomy" id="272843"/>
    <lineage>
        <taxon>Bacteria</taxon>
        <taxon>Pseudomonadati</taxon>
        <taxon>Pseudomonadota</taxon>
        <taxon>Gammaproteobacteria</taxon>
        <taxon>Pasteurellales</taxon>
        <taxon>Pasteurellaceae</taxon>
        <taxon>Pasteurella</taxon>
    </lineage>
</organism>
<gene>
    <name evidence="1" type="primary">valS</name>
    <name type="ordered locus">PM0818</name>
</gene>